<name>NU132_SCHPO</name>
<organism>
    <name type="scientific">Schizosaccharomyces pombe (strain 972 / ATCC 24843)</name>
    <name type="common">Fission yeast</name>
    <dbReference type="NCBI Taxonomy" id="284812"/>
    <lineage>
        <taxon>Eukaryota</taxon>
        <taxon>Fungi</taxon>
        <taxon>Dikarya</taxon>
        <taxon>Ascomycota</taxon>
        <taxon>Taphrinomycotina</taxon>
        <taxon>Schizosaccharomycetes</taxon>
        <taxon>Schizosaccharomycetales</taxon>
        <taxon>Schizosaccharomycetaceae</taxon>
        <taxon>Schizosaccharomyces</taxon>
    </lineage>
</organism>
<comment type="function">
    <text evidence="2">Functions as a component of the nuclear pore complex (NPC). NPC components, collectively referred to as nucleoporins (NUPs), can play the role of both NPC structural components and of docking or interaction partners for transiently associated nuclear transport factors. Active directional transport is assured by both, a Phe-Gly (FG) repeat affinity gradient for these transport factors across the NPC and a transport cofactor concentration gradient across the nuclear envelope.</text>
</comment>
<comment type="subunit">
    <text evidence="3">Component of the npc107-120 complex which consists of nup85, nup107, nup120, nup131, nup132 and seh1. Interacts with nup107.</text>
</comment>
<comment type="interaction">
    <interactant intactId="EBI-295780">
        <id>Q9UTH0</id>
    </interactant>
    <interactant intactId="EBI-295788">
        <id>Q10331</id>
        <label>nup107</label>
    </interactant>
    <organismsDiffer>false</organismsDiffer>
    <experiments>2</experiments>
</comment>
<comment type="subcellular location">
    <subcellularLocation>
        <location evidence="1 2 3 4">Nucleus envelope</location>
    </subcellularLocation>
</comment>
<comment type="similarity">
    <text evidence="5">Belongs to the nucleoporin Nup133 family.</text>
</comment>
<comment type="sequence caution" evidence="5">
    <conflict type="frameshift">
        <sequence resource="EMBL-CDS" id="BAA87164"/>
    </conflict>
</comment>
<sequence>MSSILGKRKNEEVVSFSPLKRISVEKSLLDSTAYNNSLDWLRSKNFKVSCLLKHFNSKIINDHPLSGSCYTDIGYALINSRKACFILSYRQSLGTAEPPTITFPLPEEDSNGFSGQNALTAFVPSDASDKEPGLLIVMPISGRIAYWTSIGNALAQSYICPQGMESLIKLLPKEKCEHLCCSNPMKFIISTNFGRLFSVQLRDPAGQPDVSVQLFASDISTFSTILQKMKIFNYPSIHIIALKSPPLFSPYQHLLYVAEASGLLEIYDLKLENKLVSGMNLSPIFKQVLREGCPDASGLEVLDLTICPTNGNLVSFLVCWKNSINYRYMIISLDFSDISSPSVMNIHPLYSFSSKSLESSKLHYSSSGNSLFVVLTDAVIIVHVQEDDKDIVSRTSWEEVIRMNTNVSGGIFMSTCYKYVLGKYSIPTESCFIATPYSGIAEIEVHSLEHPANNESLVKSKLEEAVFYSFLPGNPIDFSCNYLRSIKKPELERIIVDLGMDILNSRSTHLPPLFASLMQHLSCRLNSLNNLVRYIRSMSLDVDRQVLYKLRVMGEKCNSVRYLWNTIDTEFSTVSHSLIFQRIIYRLTQSASSDNALREWFLHNIESIDQLIAQAHEFCIDSGSRVQELPLEVLDVIMEANEVILAIQSSALAYRRESQKIYKLSIDTFGEEVPWTSTPETLVLLCRQFELTRSALVQSHQGTSDVENTFKIKDKGVLRNVVSNLEVQLVALTEVCFDAYSERIRWIEQRCGKDASEIQDVKEAFAVNRRFWVQTLSDIGKGSSAIRIAEKYSDYRSLVELCYQLYEDNELTDALNNYLDLFGIKFAFILYDYFVENGMALELLNSDRFNKSYLKQFFKSRDYNQISWMHDMRLGDYDAASHRLLQLATKQEKLVDKKESELSLSKLFLYAVPSNSGNIRDLVLVEQKLEQLHIQKMVSKSVMPVVERLRSQGKKYQLVEAVVDDLIGAKVAPVIARQVMQRVVKKFIAGQVVEATELLEYLSFSLYRREDLVEGEVTDYYLALRLLLTTRLTDDAKRFYENTIWRRAVLHDNWIQVLDTQGKNDAIIETQFRMSALYRTLEAVTINGLFHEGLIRPGSLSSCKFEGYDPQNLISIYPPARFGDVTEVTKVLNRESVKLDHYLTKTNLNTCYISMCLSCDTI</sequence>
<gene>
    <name type="primary">nup132</name>
    <name type="synonym">nup133b</name>
    <name type="ORF">SPAC1805.04</name>
</gene>
<evidence type="ECO:0000269" key="1">
    <source>
    </source>
</evidence>
<evidence type="ECO:0000269" key="2">
    <source>
    </source>
</evidence>
<evidence type="ECO:0000269" key="3">
    <source>
    </source>
</evidence>
<evidence type="ECO:0000269" key="4">
    <source>
    </source>
</evidence>
<evidence type="ECO:0000305" key="5"/>
<protein>
    <recommendedName>
        <fullName>Nucleoporin nup132</fullName>
    </recommendedName>
    <alternativeName>
        <fullName>Nuclear pore protein nup132</fullName>
    </alternativeName>
</protein>
<feature type="chain" id="PRO_0000290669" description="Nucleoporin nup132">
    <location>
        <begin position="1"/>
        <end position="1162"/>
    </location>
</feature>
<dbReference type="EMBL" id="CU329670">
    <property type="protein sequence ID" value="CAB55845.1"/>
    <property type="molecule type" value="Genomic_DNA"/>
</dbReference>
<dbReference type="EMBL" id="AB027860">
    <property type="protein sequence ID" value="BAA87164.1"/>
    <property type="status" value="ALT_FRAME"/>
    <property type="molecule type" value="Genomic_DNA"/>
</dbReference>
<dbReference type="PIR" id="T37889">
    <property type="entry name" value="T37889"/>
</dbReference>
<dbReference type="RefSeq" id="NP_593915.1">
    <property type="nucleotide sequence ID" value="NM_001019344.2"/>
</dbReference>
<dbReference type="SMR" id="Q9UTH0"/>
<dbReference type="BioGRID" id="278842">
    <property type="interactions" value="126"/>
</dbReference>
<dbReference type="FunCoup" id="Q9UTH0">
    <property type="interactions" value="144"/>
</dbReference>
<dbReference type="IntAct" id="Q9UTH0">
    <property type="interactions" value="1"/>
</dbReference>
<dbReference type="STRING" id="284812.Q9UTH0"/>
<dbReference type="iPTMnet" id="Q9UTH0"/>
<dbReference type="PaxDb" id="4896-SPAC1805.04.1"/>
<dbReference type="EnsemblFungi" id="SPAC1805.04.1">
    <property type="protein sequence ID" value="SPAC1805.04.1:pep"/>
    <property type="gene ID" value="SPAC1805.04"/>
</dbReference>
<dbReference type="GeneID" id="2542378"/>
<dbReference type="KEGG" id="spo:2542378"/>
<dbReference type="PomBase" id="SPAC1805.04">
    <property type="gene designation" value="nup132"/>
</dbReference>
<dbReference type="VEuPathDB" id="FungiDB:SPAC1805.04"/>
<dbReference type="eggNOG" id="KOG4121">
    <property type="taxonomic scope" value="Eukaryota"/>
</dbReference>
<dbReference type="HOGENOM" id="CLU_274527_0_0_1"/>
<dbReference type="InParanoid" id="Q9UTH0"/>
<dbReference type="OMA" id="HVATLLW"/>
<dbReference type="PhylomeDB" id="Q9UTH0"/>
<dbReference type="PRO" id="PR:Q9UTH0"/>
<dbReference type="Proteomes" id="UP000002485">
    <property type="component" value="Chromosome I"/>
</dbReference>
<dbReference type="GO" id="GO:0140599">
    <property type="term" value="C:mitotic nuclear bridge midzone membrane domain"/>
    <property type="evidence" value="ECO:0000314"/>
    <property type="project" value="PomBase"/>
</dbReference>
<dbReference type="GO" id="GO:0005635">
    <property type="term" value="C:nuclear envelope"/>
    <property type="evidence" value="ECO:0007005"/>
    <property type="project" value="PomBase"/>
</dbReference>
<dbReference type="GO" id="GO:0031965">
    <property type="term" value="C:nuclear membrane"/>
    <property type="evidence" value="ECO:0007005"/>
    <property type="project" value="PomBase"/>
</dbReference>
<dbReference type="GO" id="GO:0034399">
    <property type="term" value="C:nuclear periphery"/>
    <property type="evidence" value="ECO:0000314"/>
    <property type="project" value="PomBase"/>
</dbReference>
<dbReference type="GO" id="GO:0005643">
    <property type="term" value="C:nuclear pore"/>
    <property type="evidence" value="ECO:0000314"/>
    <property type="project" value="PomBase"/>
</dbReference>
<dbReference type="GO" id="GO:0031080">
    <property type="term" value="C:nuclear pore outer ring"/>
    <property type="evidence" value="ECO:0000314"/>
    <property type="project" value="PomBase"/>
</dbReference>
<dbReference type="GO" id="GO:0140602">
    <property type="term" value="C:nucleolar peripheral inclusion body"/>
    <property type="evidence" value="ECO:0000314"/>
    <property type="project" value="PomBase"/>
</dbReference>
<dbReference type="GO" id="GO:0017056">
    <property type="term" value="F:structural constituent of nuclear pore"/>
    <property type="evidence" value="ECO:0000318"/>
    <property type="project" value="GO_Central"/>
</dbReference>
<dbReference type="GO" id="GO:0051383">
    <property type="term" value="P:kinetochore organization"/>
    <property type="evidence" value="ECO:0000269"/>
    <property type="project" value="PomBase"/>
</dbReference>
<dbReference type="GO" id="GO:1990426">
    <property type="term" value="P:mitotic recombination-dependent replication fork processing"/>
    <property type="evidence" value="ECO:0000315"/>
    <property type="project" value="PomBase"/>
</dbReference>
<dbReference type="GO" id="GO:0016973">
    <property type="term" value="P:poly(A)+ mRNA export from nucleus"/>
    <property type="evidence" value="ECO:0000315"/>
    <property type="project" value="PomBase"/>
</dbReference>
<dbReference type="GO" id="GO:0006606">
    <property type="term" value="P:protein import into nucleus"/>
    <property type="evidence" value="ECO:0000318"/>
    <property type="project" value="GO_Central"/>
</dbReference>
<dbReference type="GO" id="GO:0031297">
    <property type="term" value="P:replication fork processing"/>
    <property type="evidence" value="ECO:0000315"/>
    <property type="project" value="PomBase"/>
</dbReference>
<dbReference type="GO" id="GO:0000972">
    <property type="term" value="P:transcription-dependent tethering of RNA polymerase II gene DNA at nuclear periphery"/>
    <property type="evidence" value="ECO:0000318"/>
    <property type="project" value="GO_Central"/>
</dbReference>
<dbReference type="Gene3D" id="1.20.58.1380">
    <property type="match status" value="1"/>
</dbReference>
<dbReference type="Gene3D" id="2.130.10.10">
    <property type="entry name" value="YVTN repeat-like/Quinoprotein amine dehydrogenase"/>
    <property type="match status" value="1"/>
</dbReference>
<dbReference type="InterPro" id="IPR007187">
    <property type="entry name" value="Nucleoporin_Nup133/Nup155_C"/>
</dbReference>
<dbReference type="InterPro" id="IPR014908">
    <property type="entry name" value="Nucleoporin_Nup133/Nup155_N"/>
</dbReference>
<dbReference type="InterPro" id="IPR037624">
    <property type="entry name" value="Nup133-like"/>
</dbReference>
<dbReference type="InterPro" id="IPR015943">
    <property type="entry name" value="WD40/YVTN_repeat-like_dom_sf"/>
</dbReference>
<dbReference type="PANTHER" id="PTHR13405">
    <property type="entry name" value="NUCLEAR PORE COMPLEX PROTEIN NUP133"/>
    <property type="match status" value="1"/>
</dbReference>
<dbReference type="PANTHER" id="PTHR13405:SF12">
    <property type="entry name" value="NUCLEOPORIN NUP132"/>
    <property type="match status" value="1"/>
</dbReference>
<dbReference type="Pfam" id="PF03177">
    <property type="entry name" value="Nucleoporin_C"/>
    <property type="match status" value="1"/>
</dbReference>
<dbReference type="Pfam" id="PF08801">
    <property type="entry name" value="Nucleoporin_N"/>
    <property type="match status" value="1"/>
</dbReference>
<dbReference type="SUPFAM" id="SSF117289">
    <property type="entry name" value="Nucleoporin domain"/>
    <property type="match status" value="1"/>
</dbReference>
<reference key="1">
    <citation type="journal article" date="2002" name="Nature">
        <title>The genome sequence of Schizosaccharomyces pombe.</title>
        <authorList>
            <person name="Wood V."/>
            <person name="Gwilliam R."/>
            <person name="Rajandream M.A."/>
            <person name="Lyne M.H."/>
            <person name="Lyne R."/>
            <person name="Stewart A."/>
            <person name="Sgouros J.G."/>
            <person name="Peat N."/>
            <person name="Hayles J."/>
            <person name="Baker S.G."/>
            <person name="Basham D."/>
            <person name="Bowman S."/>
            <person name="Brooks K."/>
            <person name="Brown D."/>
            <person name="Brown S."/>
            <person name="Chillingworth T."/>
            <person name="Churcher C.M."/>
            <person name="Collins M."/>
            <person name="Connor R."/>
            <person name="Cronin A."/>
            <person name="Davis P."/>
            <person name="Feltwell T."/>
            <person name="Fraser A."/>
            <person name="Gentles S."/>
            <person name="Goble A."/>
            <person name="Hamlin N."/>
            <person name="Harris D.E."/>
            <person name="Hidalgo J."/>
            <person name="Hodgson G."/>
            <person name="Holroyd S."/>
            <person name="Hornsby T."/>
            <person name="Howarth S."/>
            <person name="Huckle E.J."/>
            <person name="Hunt S."/>
            <person name="Jagels K."/>
            <person name="James K.D."/>
            <person name="Jones L."/>
            <person name="Jones M."/>
            <person name="Leather S."/>
            <person name="McDonald S."/>
            <person name="McLean J."/>
            <person name="Mooney P."/>
            <person name="Moule S."/>
            <person name="Mungall K.L."/>
            <person name="Murphy L.D."/>
            <person name="Niblett D."/>
            <person name="Odell C."/>
            <person name="Oliver K."/>
            <person name="O'Neil S."/>
            <person name="Pearson D."/>
            <person name="Quail M.A."/>
            <person name="Rabbinowitsch E."/>
            <person name="Rutherford K.M."/>
            <person name="Rutter S."/>
            <person name="Saunders D."/>
            <person name="Seeger K."/>
            <person name="Sharp S."/>
            <person name="Skelton J."/>
            <person name="Simmonds M.N."/>
            <person name="Squares R."/>
            <person name="Squares S."/>
            <person name="Stevens K."/>
            <person name="Taylor K."/>
            <person name="Taylor R.G."/>
            <person name="Tivey A."/>
            <person name="Walsh S.V."/>
            <person name="Warren T."/>
            <person name="Whitehead S."/>
            <person name="Woodward J.R."/>
            <person name="Volckaert G."/>
            <person name="Aert R."/>
            <person name="Robben J."/>
            <person name="Grymonprez B."/>
            <person name="Weltjens I."/>
            <person name="Vanstreels E."/>
            <person name="Rieger M."/>
            <person name="Schaefer M."/>
            <person name="Mueller-Auer S."/>
            <person name="Gabel C."/>
            <person name="Fuchs M."/>
            <person name="Duesterhoeft A."/>
            <person name="Fritzc C."/>
            <person name="Holzer E."/>
            <person name="Moestl D."/>
            <person name="Hilbert H."/>
            <person name="Borzym K."/>
            <person name="Langer I."/>
            <person name="Beck A."/>
            <person name="Lehrach H."/>
            <person name="Reinhardt R."/>
            <person name="Pohl T.M."/>
            <person name="Eger P."/>
            <person name="Zimmermann W."/>
            <person name="Wedler H."/>
            <person name="Wambutt R."/>
            <person name="Purnelle B."/>
            <person name="Goffeau A."/>
            <person name="Cadieu E."/>
            <person name="Dreano S."/>
            <person name="Gloux S."/>
            <person name="Lelaure V."/>
            <person name="Mottier S."/>
            <person name="Galibert F."/>
            <person name="Aves S.J."/>
            <person name="Xiang Z."/>
            <person name="Hunt C."/>
            <person name="Moore K."/>
            <person name="Hurst S.M."/>
            <person name="Lucas M."/>
            <person name="Rochet M."/>
            <person name="Gaillardin C."/>
            <person name="Tallada V.A."/>
            <person name="Garzon A."/>
            <person name="Thode G."/>
            <person name="Daga R.R."/>
            <person name="Cruzado L."/>
            <person name="Jimenez J."/>
            <person name="Sanchez M."/>
            <person name="del Rey F."/>
            <person name="Benito J."/>
            <person name="Dominguez A."/>
            <person name="Revuelta J.L."/>
            <person name="Moreno S."/>
            <person name="Armstrong J."/>
            <person name="Forsburg S.L."/>
            <person name="Cerutti L."/>
            <person name="Lowe T."/>
            <person name="McCombie W.R."/>
            <person name="Paulsen I."/>
            <person name="Potashkin J."/>
            <person name="Shpakovski G.V."/>
            <person name="Ussery D."/>
            <person name="Barrell B.G."/>
            <person name="Nurse P."/>
        </authorList>
    </citation>
    <scope>NUCLEOTIDE SEQUENCE [LARGE SCALE GENOMIC DNA]</scope>
    <source>
        <strain>972 / ATCC 24843</strain>
    </source>
</reference>
<reference key="2">
    <citation type="journal article" date="2000" name="Genes Cells">
        <title>Large-scale screening of intracellular protein localization in living fission yeast cells by the use of a GFP-fusion genomic DNA library.</title>
        <authorList>
            <person name="Ding D.-Q."/>
            <person name="Tomita Y."/>
            <person name="Yamamoto A."/>
            <person name="Chikashige Y."/>
            <person name="Haraguchi T."/>
            <person name="Hiraoka Y."/>
        </authorList>
    </citation>
    <scope>NUCLEOTIDE SEQUENCE [LARGE SCALE GENOMIC DNA] OF 909-1055</scope>
    <scope>SUBCELLULAR LOCATION</scope>
    <source>
        <strain>ATCC 38364 / 968</strain>
    </source>
</reference>
<reference key="3">
    <citation type="journal article" date="2004" name="Mol. Cell. Biol.">
        <title>The fission yeast Nup107-120 complex functionally interacts with the small GTPase Ran/Spi1 and is required for mRNA export, nuclear pore distribution, and proper cell division.</title>
        <authorList>
            <person name="Bai S.W."/>
            <person name="Rouquette J."/>
            <person name="Umeda M."/>
            <person name="Faigle W."/>
            <person name="Loew D."/>
            <person name="Sazer S."/>
            <person name="Doye V."/>
        </authorList>
    </citation>
    <scope>IDENTIFICATION IN NUP107-120 COMPLEX</scope>
    <scope>INTERACTION WITH NUP107</scope>
    <scope>SUBCELLULAR LOCATION</scope>
</reference>
<reference key="4">
    <citation type="journal article" date="2004" name="Yeast">
        <title>Identification of genes encoding putative nucleoporins and transport factors in the fission yeast Schizosaccharomyces pombe: a deletion analysis.</title>
        <authorList>
            <person name="Chen X.Q."/>
            <person name="Du X."/>
            <person name="Liu J."/>
            <person name="Balasubramanian M.K."/>
            <person name="Balasundaram D."/>
        </authorList>
    </citation>
    <scope>FUNCTION</scope>
    <scope>SUBCELLULAR LOCATION</scope>
</reference>
<reference key="5">
    <citation type="journal article" date="2006" name="Nat. Biotechnol.">
        <title>ORFeome cloning and global analysis of protein localization in the fission yeast Schizosaccharomyces pombe.</title>
        <authorList>
            <person name="Matsuyama A."/>
            <person name="Arai R."/>
            <person name="Yashiroda Y."/>
            <person name="Shirai A."/>
            <person name="Kamata A."/>
            <person name="Sekido S."/>
            <person name="Kobayashi Y."/>
            <person name="Hashimoto A."/>
            <person name="Hamamoto M."/>
            <person name="Hiraoka Y."/>
            <person name="Horinouchi S."/>
            <person name="Yoshida M."/>
        </authorList>
    </citation>
    <scope>SUBCELLULAR LOCATION [LARGE SCALE ANALYSIS]</scope>
</reference>
<accession>Q9UTH0</accession>
<accession>Q9UU23</accession>
<keyword id="KW-0539">Nucleus</keyword>
<keyword id="KW-1185">Reference proteome</keyword>
<keyword id="KW-0813">Transport</keyword>
<proteinExistence type="evidence at protein level"/>